<evidence type="ECO:0000250" key="1">
    <source>
        <dbReference type="UniProtKB" id="P00083"/>
    </source>
</evidence>
<evidence type="ECO:0000250" key="2">
    <source>
        <dbReference type="UniProtKB" id="P0C0X8"/>
    </source>
</evidence>
<evidence type="ECO:0000255" key="3"/>
<evidence type="ECO:0000255" key="4">
    <source>
        <dbReference type="PROSITE-ProRule" id="PRU00433"/>
    </source>
</evidence>
<evidence type="ECO:0000269" key="5">
    <source>
    </source>
</evidence>
<evidence type="ECO:0000305" key="6"/>
<reference key="1">
    <citation type="journal article" date="2010" name="Arch. Microbiol.">
        <title>Evidence from the structure and function of cytochromes c(2) that nonsulfur purple bacterial photosynthesis followed the evolution of oxygen respiration.</title>
        <authorList>
            <person name="Meyer T."/>
            <person name="Van Driessche G."/>
            <person name="Ambler R."/>
            <person name="Kyndt J."/>
            <person name="Devreese B."/>
            <person name="Van Beeumen J."/>
            <person name="Cusanovich M."/>
        </authorList>
    </citation>
    <scope>PROTEIN SEQUENCE</scope>
    <scope>SUBCELLULAR LOCATION</scope>
</reference>
<protein>
    <recommendedName>
        <fullName evidence="1">Cytochrome c2</fullName>
    </recommendedName>
</protein>
<name>CYC2_AFIMA</name>
<keyword id="KW-0903">Direct protein sequencing</keyword>
<keyword id="KW-0249">Electron transport</keyword>
<keyword id="KW-0349">Heme</keyword>
<keyword id="KW-0408">Iron</keyword>
<keyword id="KW-0479">Metal-binding</keyword>
<keyword id="KW-0574">Periplasm</keyword>
<keyword id="KW-0602">Photosynthesis</keyword>
<keyword id="KW-0873">Pyrrolidone carboxylic acid</keyword>
<keyword id="KW-0813">Transport</keyword>
<feature type="chain" id="PRO_0000380710" description="Cytochrome c2">
    <location>
        <begin position="1"/>
        <end position="124"/>
    </location>
</feature>
<feature type="binding site" description="covalent" evidence="1 4">
    <location>
        <position position="16"/>
    </location>
    <ligand>
        <name>heme c</name>
        <dbReference type="ChEBI" id="CHEBI:61717"/>
    </ligand>
</feature>
<feature type="binding site" description="covalent" evidence="1 4">
    <location>
        <position position="19"/>
    </location>
    <ligand>
        <name>heme c</name>
        <dbReference type="ChEBI" id="CHEBI:61717"/>
    </ligand>
</feature>
<feature type="binding site" description="axial binding residue" evidence="1 4">
    <location>
        <position position="20"/>
    </location>
    <ligand>
        <name>heme c</name>
        <dbReference type="ChEBI" id="CHEBI:61717"/>
    </ligand>
    <ligandPart>
        <name>Fe</name>
        <dbReference type="ChEBI" id="CHEBI:18248"/>
    </ligandPart>
</feature>
<feature type="binding site" description="axial binding residue" evidence="1 4">
    <location>
        <position position="85"/>
    </location>
    <ligand>
        <name>heme c</name>
        <dbReference type="ChEBI" id="CHEBI:61717"/>
    </ligand>
    <ligandPart>
        <name>Fe</name>
        <dbReference type="ChEBI" id="CHEBI:18248"/>
    </ligandPart>
</feature>
<feature type="modified residue" description="Pyrrolidone carboxylic acid" evidence="2">
    <location>
        <position position="1"/>
    </location>
</feature>
<organism>
    <name type="scientific">Afifella marina</name>
    <name type="common">Rhodobium marinum</name>
    <name type="synonym">Rhodopseudomonas marina</name>
    <dbReference type="NCBI Taxonomy" id="1080"/>
    <lineage>
        <taxon>Bacteria</taxon>
        <taxon>Pseudomonadati</taxon>
        <taxon>Pseudomonadota</taxon>
        <taxon>Alphaproteobacteria</taxon>
        <taxon>Hyphomicrobiales</taxon>
        <taxon>Afifellaceae</taxon>
        <taxon>Afifella</taxon>
    </lineage>
</organism>
<sequence>QXGDLVAAGKKVYRQCHACHSVGEGAKNRVGPEQNNLFGRVAGSLPDFRYSKAMKSAGENGLVWTDKSLHEYLKNPRAYVPKTKMIFAGLKKPEDIDAVVAYLKTFDTDGMPDPDASTYTPPNG</sequence>
<dbReference type="GO" id="GO:0042597">
    <property type="term" value="C:periplasmic space"/>
    <property type="evidence" value="ECO:0000314"/>
    <property type="project" value="UniProtKB"/>
</dbReference>
<dbReference type="GO" id="GO:0009055">
    <property type="term" value="F:electron transfer activity"/>
    <property type="evidence" value="ECO:0007669"/>
    <property type="project" value="InterPro"/>
</dbReference>
<dbReference type="GO" id="GO:0020037">
    <property type="term" value="F:heme binding"/>
    <property type="evidence" value="ECO:0007669"/>
    <property type="project" value="InterPro"/>
</dbReference>
<dbReference type="GO" id="GO:0046872">
    <property type="term" value="F:metal ion binding"/>
    <property type="evidence" value="ECO:0007669"/>
    <property type="project" value="UniProtKB-KW"/>
</dbReference>
<dbReference type="GO" id="GO:0015979">
    <property type="term" value="P:photosynthesis"/>
    <property type="evidence" value="ECO:0007669"/>
    <property type="project" value="UniProtKB-KW"/>
</dbReference>
<dbReference type="Gene3D" id="1.10.760.10">
    <property type="entry name" value="Cytochrome c-like domain"/>
    <property type="match status" value="1"/>
</dbReference>
<dbReference type="InterPro" id="IPR009056">
    <property type="entry name" value="Cyt_c-like_dom"/>
</dbReference>
<dbReference type="InterPro" id="IPR036909">
    <property type="entry name" value="Cyt_c-like_dom_sf"/>
</dbReference>
<dbReference type="InterPro" id="IPR002327">
    <property type="entry name" value="Cyt_c_1A/1B"/>
</dbReference>
<dbReference type="PANTHER" id="PTHR11961">
    <property type="entry name" value="CYTOCHROME C"/>
    <property type="match status" value="1"/>
</dbReference>
<dbReference type="Pfam" id="PF00034">
    <property type="entry name" value="Cytochrom_C"/>
    <property type="match status" value="1"/>
</dbReference>
<dbReference type="PRINTS" id="PR00604">
    <property type="entry name" value="CYTCHRMECIAB"/>
</dbReference>
<dbReference type="SUPFAM" id="SSF46626">
    <property type="entry name" value="Cytochrome c"/>
    <property type="match status" value="1"/>
</dbReference>
<dbReference type="PROSITE" id="PS51007">
    <property type="entry name" value="CYTC"/>
    <property type="match status" value="1"/>
</dbReference>
<comment type="function">
    <text evidence="6">Cytochrome c2 is found mainly in purple, non-sulfur, photosynthetic bacteria where it functions as the electron donor to the oxidized bacteriochlorophyll in the photophosphorylation pathway. However, it may also have a role in the respiratory chain and is found in some non-photosynthetic bacteria.</text>
</comment>
<comment type="subcellular location">
    <subcellularLocation>
        <location evidence="5">Periplasm</location>
    </subcellularLocation>
</comment>
<comment type="PTM">
    <text evidence="1">Binds 1 heme c group covalently per subunit.</text>
</comment>
<comment type="similarity">
    <text evidence="3">Belongs to the cytochrome c family.</text>
</comment>
<proteinExistence type="evidence at protein level"/>
<accession>P86321</accession>